<comment type="catalytic activity">
    <reaction evidence="1">
        <text>CMP + ATP = CDP + ADP</text>
        <dbReference type="Rhea" id="RHEA:11600"/>
        <dbReference type="ChEBI" id="CHEBI:30616"/>
        <dbReference type="ChEBI" id="CHEBI:58069"/>
        <dbReference type="ChEBI" id="CHEBI:60377"/>
        <dbReference type="ChEBI" id="CHEBI:456216"/>
        <dbReference type="EC" id="2.7.4.25"/>
    </reaction>
</comment>
<comment type="catalytic activity">
    <reaction evidence="1">
        <text>dCMP + ATP = dCDP + ADP</text>
        <dbReference type="Rhea" id="RHEA:25094"/>
        <dbReference type="ChEBI" id="CHEBI:30616"/>
        <dbReference type="ChEBI" id="CHEBI:57566"/>
        <dbReference type="ChEBI" id="CHEBI:58593"/>
        <dbReference type="ChEBI" id="CHEBI:456216"/>
        <dbReference type="EC" id="2.7.4.25"/>
    </reaction>
</comment>
<comment type="subcellular location">
    <subcellularLocation>
        <location evidence="1">Cytoplasm</location>
    </subcellularLocation>
</comment>
<comment type="similarity">
    <text evidence="1">Belongs to the cytidylate kinase family. Type 1 subfamily.</text>
</comment>
<keyword id="KW-0067">ATP-binding</keyword>
<keyword id="KW-0963">Cytoplasm</keyword>
<keyword id="KW-0418">Kinase</keyword>
<keyword id="KW-0547">Nucleotide-binding</keyword>
<keyword id="KW-1185">Reference proteome</keyword>
<keyword id="KW-0808">Transferase</keyword>
<feature type="chain" id="PRO_1000071819" description="Cytidylate kinase">
    <location>
        <begin position="1"/>
        <end position="206"/>
    </location>
</feature>
<feature type="binding site" evidence="1">
    <location>
        <begin position="7"/>
        <end position="15"/>
    </location>
    <ligand>
        <name>ATP</name>
        <dbReference type="ChEBI" id="CHEBI:30616"/>
    </ligand>
</feature>
<dbReference type="EC" id="2.7.4.25" evidence="1"/>
<dbReference type="EMBL" id="AP009384">
    <property type="protein sequence ID" value="BAF89930.1"/>
    <property type="molecule type" value="Genomic_DNA"/>
</dbReference>
<dbReference type="RefSeq" id="WP_012172452.1">
    <property type="nucleotide sequence ID" value="NC_009937.1"/>
</dbReference>
<dbReference type="SMR" id="A8IKN6"/>
<dbReference type="STRING" id="438753.AZC_3932"/>
<dbReference type="KEGG" id="azc:AZC_3932"/>
<dbReference type="eggNOG" id="COG0283">
    <property type="taxonomic scope" value="Bacteria"/>
</dbReference>
<dbReference type="HOGENOM" id="CLU_079959_0_1_5"/>
<dbReference type="Proteomes" id="UP000000270">
    <property type="component" value="Chromosome"/>
</dbReference>
<dbReference type="GO" id="GO:0005737">
    <property type="term" value="C:cytoplasm"/>
    <property type="evidence" value="ECO:0007669"/>
    <property type="project" value="UniProtKB-SubCell"/>
</dbReference>
<dbReference type="GO" id="GO:0005524">
    <property type="term" value="F:ATP binding"/>
    <property type="evidence" value="ECO:0007669"/>
    <property type="project" value="UniProtKB-UniRule"/>
</dbReference>
<dbReference type="GO" id="GO:0036430">
    <property type="term" value="F:CMP kinase activity"/>
    <property type="evidence" value="ECO:0007669"/>
    <property type="project" value="RHEA"/>
</dbReference>
<dbReference type="GO" id="GO:0036431">
    <property type="term" value="F:dCMP kinase activity"/>
    <property type="evidence" value="ECO:0007669"/>
    <property type="project" value="RHEA"/>
</dbReference>
<dbReference type="GO" id="GO:0006220">
    <property type="term" value="P:pyrimidine nucleotide metabolic process"/>
    <property type="evidence" value="ECO:0007669"/>
    <property type="project" value="UniProtKB-UniRule"/>
</dbReference>
<dbReference type="CDD" id="cd02020">
    <property type="entry name" value="CMPK"/>
    <property type="match status" value="1"/>
</dbReference>
<dbReference type="Gene3D" id="3.40.50.300">
    <property type="entry name" value="P-loop containing nucleotide triphosphate hydrolases"/>
    <property type="match status" value="1"/>
</dbReference>
<dbReference type="HAMAP" id="MF_00238">
    <property type="entry name" value="Cytidyl_kinase_type1"/>
    <property type="match status" value="1"/>
</dbReference>
<dbReference type="InterPro" id="IPR003136">
    <property type="entry name" value="Cytidylate_kin"/>
</dbReference>
<dbReference type="InterPro" id="IPR011994">
    <property type="entry name" value="Cytidylate_kinase_dom"/>
</dbReference>
<dbReference type="InterPro" id="IPR027417">
    <property type="entry name" value="P-loop_NTPase"/>
</dbReference>
<dbReference type="NCBIfam" id="TIGR00017">
    <property type="entry name" value="cmk"/>
    <property type="match status" value="1"/>
</dbReference>
<dbReference type="Pfam" id="PF02224">
    <property type="entry name" value="Cytidylate_kin"/>
    <property type="match status" value="1"/>
</dbReference>
<dbReference type="SUPFAM" id="SSF52540">
    <property type="entry name" value="P-loop containing nucleoside triphosphate hydrolases"/>
    <property type="match status" value="1"/>
</dbReference>
<organism>
    <name type="scientific">Azorhizobium caulinodans (strain ATCC 43989 / DSM 5975 / JCM 20966 / LMG 6465 / NBRC 14845 / NCIMB 13405 / ORS 571)</name>
    <dbReference type="NCBI Taxonomy" id="438753"/>
    <lineage>
        <taxon>Bacteria</taxon>
        <taxon>Pseudomonadati</taxon>
        <taxon>Pseudomonadota</taxon>
        <taxon>Alphaproteobacteria</taxon>
        <taxon>Hyphomicrobiales</taxon>
        <taxon>Xanthobacteraceae</taxon>
        <taxon>Azorhizobium</taxon>
    </lineage>
</organism>
<name>KCY_AZOC5</name>
<sequence length="206" mass="21369">MIIAIDGPAASGKGTLGKRIAGHLGLAHLDTGLLYRAVGAACLAAGKLDDEAASVEAARTLDVTTLDPESLRTGAIGEAASVVAARPGVRAALVDLQRRFAARPEGAVLDGRDIGSVICPDATVKLFVTASPEVRAERRFKELAARDPLASYEAVLADIHKRDERDSNRAAAPLVMASDAVLLDTSHLGIEESFAAALAIVERARG</sequence>
<protein>
    <recommendedName>
        <fullName evidence="1">Cytidylate kinase</fullName>
        <shortName evidence="1">CK</shortName>
        <ecNumber evidence="1">2.7.4.25</ecNumber>
    </recommendedName>
    <alternativeName>
        <fullName evidence="1">Cytidine monophosphate kinase</fullName>
        <shortName evidence="1">CMP kinase</shortName>
    </alternativeName>
</protein>
<gene>
    <name evidence="1" type="primary">cmk</name>
    <name type="ordered locus">AZC_3932</name>
</gene>
<reference key="1">
    <citation type="submission" date="2007-04" db="EMBL/GenBank/DDBJ databases">
        <title>Complete genome sequence of the nitrogen-fixing bacterium Azorhizobium caulinodans ORS571.</title>
        <authorList>
            <person name="Lee K.B."/>
            <person name="Backer P.D."/>
            <person name="Aono T."/>
            <person name="Liu C.T."/>
            <person name="Suzuki S."/>
            <person name="Suzuki T."/>
            <person name="Kaneko T."/>
            <person name="Yamada M."/>
            <person name="Tabata S."/>
            <person name="Kupfer D.M."/>
            <person name="Najar F.Z."/>
            <person name="Wiley G.B."/>
            <person name="Roe B."/>
            <person name="Binnewies T."/>
            <person name="Ussery D."/>
            <person name="Vereecke D."/>
            <person name="Gevers D."/>
            <person name="Holsters M."/>
            <person name="Oyaizu H."/>
        </authorList>
    </citation>
    <scope>NUCLEOTIDE SEQUENCE [LARGE SCALE GENOMIC DNA]</scope>
    <source>
        <strain>ATCC 43989 / DSM 5975 / JCM 20966 / LMG 6465 / NBRC 14845 / NCIMB 13405 / ORS 571</strain>
    </source>
</reference>
<proteinExistence type="inferred from homology"/>
<evidence type="ECO:0000255" key="1">
    <source>
        <dbReference type="HAMAP-Rule" id="MF_00238"/>
    </source>
</evidence>
<accession>A8IKN6</accession>